<sequence>MVRPKQSIQSHRKDEHVFLAEKFHQDDRQNDFDGLRFIHQSLPELAIADVDISTQFAGTTWQSPFYINGMTGGSQQTKKLNAQLAQVAQIAGLPMATGSQSVAIKDPTLVDTFSVIREFNPAGFILANIGAGNDLSVAQKAVAMTQANALEIHVNTAQEVVMPEGDREFYWLDQIGEIVANLDVPVIVKEVGFGMSAETIAKLQSVGVTNIDVSGKGGTNFVTIENERRRDKAYDYLSDWGQSTVESLFESQAFQTELTILASGGIRNPLDIVKALRLGASAVGISGQILHMLIKTGPTETAEQLLAWQAQIQSIMAILGARNLTALQSAPMILSPNLRHYLNERHLSL</sequence>
<accession>Q38X74</accession>
<name>IDI2_LATSS</name>
<dbReference type="EC" id="5.3.3.2" evidence="1"/>
<dbReference type="EMBL" id="CR936503">
    <property type="protein sequence ID" value="CAI55207.1"/>
    <property type="molecule type" value="Genomic_DNA"/>
</dbReference>
<dbReference type="RefSeq" id="WP_011374607.1">
    <property type="nucleotide sequence ID" value="NC_007576.1"/>
</dbReference>
<dbReference type="SMR" id="Q38X74"/>
<dbReference type="STRING" id="314315.LCA_0905"/>
<dbReference type="KEGG" id="lsa:LCA_0905"/>
<dbReference type="eggNOG" id="COG1304">
    <property type="taxonomic scope" value="Bacteria"/>
</dbReference>
<dbReference type="HOGENOM" id="CLU_065515_0_0_9"/>
<dbReference type="OrthoDB" id="9795032at2"/>
<dbReference type="Proteomes" id="UP000002707">
    <property type="component" value="Chromosome"/>
</dbReference>
<dbReference type="GO" id="GO:0005737">
    <property type="term" value="C:cytoplasm"/>
    <property type="evidence" value="ECO:0007669"/>
    <property type="project" value="UniProtKB-SubCell"/>
</dbReference>
<dbReference type="GO" id="GO:0010181">
    <property type="term" value="F:FMN binding"/>
    <property type="evidence" value="ECO:0007669"/>
    <property type="project" value="UniProtKB-UniRule"/>
</dbReference>
<dbReference type="GO" id="GO:0004452">
    <property type="term" value="F:isopentenyl-diphosphate delta-isomerase activity"/>
    <property type="evidence" value="ECO:0007669"/>
    <property type="project" value="UniProtKB-UniRule"/>
</dbReference>
<dbReference type="GO" id="GO:0000287">
    <property type="term" value="F:magnesium ion binding"/>
    <property type="evidence" value="ECO:0007669"/>
    <property type="project" value="UniProtKB-UniRule"/>
</dbReference>
<dbReference type="GO" id="GO:0070402">
    <property type="term" value="F:NADPH binding"/>
    <property type="evidence" value="ECO:0007669"/>
    <property type="project" value="UniProtKB-UniRule"/>
</dbReference>
<dbReference type="GO" id="GO:0016491">
    <property type="term" value="F:oxidoreductase activity"/>
    <property type="evidence" value="ECO:0007669"/>
    <property type="project" value="InterPro"/>
</dbReference>
<dbReference type="GO" id="GO:0008299">
    <property type="term" value="P:isoprenoid biosynthetic process"/>
    <property type="evidence" value="ECO:0007669"/>
    <property type="project" value="UniProtKB-UniRule"/>
</dbReference>
<dbReference type="CDD" id="cd02811">
    <property type="entry name" value="IDI-2_FMN"/>
    <property type="match status" value="1"/>
</dbReference>
<dbReference type="Gene3D" id="3.20.20.70">
    <property type="entry name" value="Aldolase class I"/>
    <property type="match status" value="1"/>
</dbReference>
<dbReference type="HAMAP" id="MF_00354">
    <property type="entry name" value="Idi_2"/>
    <property type="match status" value="1"/>
</dbReference>
<dbReference type="InterPro" id="IPR013785">
    <property type="entry name" value="Aldolase_TIM"/>
</dbReference>
<dbReference type="InterPro" id="IPR000262">
    <property type="entry name" value="FMN-dep_DH"/>
</dbReference>
<dbReference type="InterPro" id="IPR011179">
    <property type="entry name" value="IPdP_isomerase"/>
</dbReference>
<dbReference type="NCBIfam" id="TIGR02151">
    <property type="entry name" value="IPP_isom_2"/>
    <property type="match status" value="1"/>
</dbReference>
<dbReference type="PANTHER" id="PTHR43665">
    <property type="entry name" value="ISOPENTENYL-DIPHOSPHATE DELTA-ISOMERASE"/>
    <property type="match status" value="1"/>
</dbReference>
<dbReference type="PANTHER" id="PTHR43665:SF1">
    <property type="entry name" value="ISOPENTENYL-DIPHOSPHATE DELTA-ISOMERASE"/>
    <property type="match status" value="1"/>
</dbReference>
<dbReference type="Pfam" id="PF01070">
    <property type="entry name" value="FMN_dh"/>
    <property type="match status" value="1"/>
</dbReference>
<dbReference type="PIRSF" id="PIRSF003314">
    <property type="entry name" value="IPP_isomerase"/>
    <property type="match status" value="1"/>
</dbReference>
<dbReference type="SUPFAM" id="SSF51395">
    <property type="entry name" value="FMN-linked oxidoreductases"/>
    <property type="match status" value="1"/>
</dbReference>
<keyword id="KW-0963">Cytoplasm</keyword>
<keyword id="KW-0285">Flavoprotein</keyword>
<keyword id="KW-0288">FMN</keyword>
<keyword id="KW-0413">Isomerase</keyword>
<keyword id="KW-0414">Isoprene biosynthesis</keyword>
<keyword id="KW-0460">Magnesium</keyword>
<keyword id="KW-0479">Metal-binding</keyword>
<keyword id="KW-0521">NADP</keyword>
<keyword id="KW-1185">Reference proteome</keyword>
<organism>
    <name type="scientific">Latilactobacillus sakei subsp. sakei (strain 23K)</name>
    <name type="common">Lactobacillus sakei subsp. sakei</name>
    <dbReference type="NCBI Taxonomy" id="314315"/>
    <lineage>
        <taxon>Bacteria</taxon>
        <taxon>Bacillati</taxon>
        <taxon>Bacillota</taxon>
        <taxon>Bacilli</taxon>
        <taxon>Lactobacillales</taxon>
        <taxon>Lactobacillaceae</taxon>
        <taxon>Latilactobacillus</taxon>
    </lineage>
</organism>
<reference key="1">
    <citation type="journal article" date="2005" name="Nat. Biotechnol.">
        <title>The complete genome sequence of the meat-borne lactic acid bacterium Lactobacillus sakei 23K.</title>
        <authorList>
            <person name="Chaillou S."/>
            <person name="Champomier-Verges M.-C."/>
            <person name="Cornet M."/>
            <person name="Crutz-Le Coq A.-M."/>
            <person name="Dudez A.-M."/>
            <person name="Martin V."/>
            <person name="Beaufils S."/>
            <person name="Darbon-Rongere E."/>
            <person name="Bossy R."/>
            <person name="Loux V."/>
            <person name="Zagorec M."/>
        </authorList>
    </citation>
    <scope>NUCLEOTIDE SEQUENCE [LARGE SCALE GENOMIC DNA]</scope>
    <source>
        <strain>23K</strain>
    </source>
</reference>
<evidence type="ECO:0000255" key="1">
    <source>
        <dbReference type="HAMAP-Rule" id="MF_00354"/>
    </source>
</evidence>
<comment type="function">
    <text evidence="1">Involved in the biosynthesis of isoprenoids. Catalyzes the 1,3-allylic rearrangement of the homoallylic substrate isopentenyl (IPP) to its allylic isomer, dimethylallyl diphosphate (DMAPP).</text>
</comment>
<comment type="catalytic activity">
    <reaction evidence="1">
        <text>isopentenyl diphosphate = dimethylallyl diphosphate</text>
        <dbReference type="Rhea" id="RHEA:23284"/>
        <dbReference type="ChEBI" id="CHEBI:57623"/>
        <dbReference type="ChEBI" id="CHEBI:128769"/>
        <dbReference type="EC" id="5.3.3.2"/>
    </reaction>
</comment>
<comment type="cofactor">
    <cofactor evidence="1">
        <name>FMN</name>
        <dbReference type="ChEBI" id="CHEBI:58210"/>
    </cofactor>
</comment>
<comment type="cofactor">
    <cofactor evidence="1">
        <name>NADPH</name>
        <dbReference type="ChEBI" id="CHEBI:57783"/>
    </cofactor>
</comment>
<comment type="cofactor">
    <cofactor evidence="1">
        <name>Mg(2+)</name>
        <dbReference type="ChEBI" id="CHEBI:18420"/>
    </cofactor>
</comment>
<comment type="subunit">
    <text evidence="1">Homooctamer. Dimer of tetramers.</text>
</comment>
<comment type="subcellular location">
    <subcellularLocation>
        <location evidence="1">Cytoplasm</location>
    </subcellularLocation>
</comment>
<comment type="similarity">
    <text evidence="1">Belongs to the IPP isomerase type 2 family.</text>
</comment>
<proteinExistence type="inferred from homology"/>
<protein>
    <recommendedName>
        <fullName evidence="1">Isopentenyl-diphosphate delta-isomerase</fullName>
        <shortName evidence="1">IPP isomerase</shortName>
        <ecNumber evidence="1">5.3.3.2</ecNumber>
    </recommendedName>
    <alternativeName>
        <fullName evidence="1">Isopentenyl diphosphate:dimethylallyl diphosphate isomerase</fullName>
    </alternativeName>
    <alternativeName>
        <fullName evidence="1">Isopentenyl pyrophosphate isomerase</fullName>
    </alternativeName>
    <alternativeName>
        <fullName evidence="1">Type 2 isopentenyl diphosphate isomerase</fullName>
        <shortName evidence="1">IDI-2</shortName>
    </alternativeName>
</protein>
<gene>
    <name evidence="1" type="primary">fni</name>
    <name type="ordered locus">LCA_0905</name>
</gene>
<feature type="chain" id="PRO_0000229504" description="Isopentenyl-diphosphate delta-isomerase">
    <location>
        <begin position="1"/>
        <end position="349"/>
    </location>
</feature>
<feature type="binding site" evidence="1">
    <location>
        <begin position="12"/>
        <end position="13"/>
    </location>
    <ligand>
        <name>substrate</name>
    </ligand>
</feature>
<feature type="binding site" evidence="1">
    <location>
        <begin position="69"/>
        <end position="71"/>
    </location>
    <ligand>
        <name>FMN</name>
        <dbReference type="ChEBI" id="CHEBI:58210"/>
    </ligand>
</feature>
<feature type="binding site" evidence="1">
    <location>
        <position position="99"/>
    </location>
    <ligand>
        <name>FMN</name>
        <dbReference type="ChEBI" id="CHEBI:58210"/>
    </ligand>
</feature>
<feature type="binding site" evidence="1">
    <location>
        <position position="128"/>
    </location>
    <ligand>
        <name>FMN</name>
        <dbReference type="ChEBI" id="CHEBI:58210"/>
    </ligand>
</feature>
<feature type="binding site" evidence="1">
    <location>
        <position position="158"/>
    </location>
    <ligand>
        <name>substrate</name>
    </ligand>
</feature>
<feature type="binding site" evidence="1">
    <location>
        <position position="159"/>
    </location>
    <ligand>
        <name>Mg(2+)</name>
        <dbReference type="ChEBI" id="CHEBI:18420"/>
    </ligand>
</feature>
<feature type="binding site" evidence="1">
    <location>
        <position position="189"/>
    </location>
    <ligand>
        <name>FMN</name>
        <dbReference type="ChEBI" id="CHEBI:58210"/>
    </ligand>
</feature>
<feature type="binding site" evidence="1">
    <location>
        <position position="214"/>
    </location>
    <ligand>
        <name>FMN</name>
        <dbReference type="ChEBI" id="CHEBI:58210"/>
    </ligand>
</feature>
<feature type="binding site" evidence="1">
    <location>
        <position position="219"/>
    </location>
    <ligand>
        <name>FMN</name>
        <dbReference type="ChEBI" id="CHEBI:58210"/>
    </ligand>
</feature>
<feature type="binding site" evidence="1">
    <location>
        <begin position="265"/>
        <end position="267"/>
    </location>
    <ligand>
        <name>FMN</name>
        <dbReference type="ChEBI" id="CHEBI:58210"/>
    </ligand>
</feature>
<feature type="binding site" evidence="1">
    <location>
        <begin position="286"/>
        <end position="287"/>
    </location>
    <ligand>
        <name>FMN</name>
        <dbReference type="ChEBI" id="CHEBI:58210"/>
    </ligand>
</feature>